<name>HEM6_FRATT</name>
<sequence length="308" mass="35854">MQEKISKFEDFLTQLQQNITTALEQHETNAAKFISDKWQKPDTHDQKLKGYGNSMIIEGGEIFEKGVVAFSRVHGSELPPSATAKRQELAGKSFIATGLSLVIHPRNPFVPTSHANFRIFIAGADTDNPIWWFGGGFDLTPYYPFEEDAIHWHQTAKNICDKHDKTYYPKFKKWCDEYFYLKHRDECRGVGGLFFDDLNDKSFDECFNFVTDCANSYLDAYIPIVAQRKNIEYSQKHKDFQLYRRGRYVEFNLVFDRGTIFGLQSGGRTESILSSMPPIATWKYNWQPELGSEEEKVYQYIKPRDWIK</sequence>
<protein>
    <recommendedName>
        <fullName evidence="1">Oxygen-dependent coproporphyrinogen-III oxidase</fullName>
        <shortName evidence="1">CPO</shortName>
        <shortName evidence="1">Coprogen oxidase</shortName>
        <shortName evidence="1">Coproporphyrinogenase</shortName>
        <ecNumber evidence="1">1.3.3.3</ecNumber>
    </recommendedName>
</protein>
<feature type="chain" id="PRO_1000133187" description="Oxygen-dependent coproporphyrinogen-III oxidase">
    <location>
        <begin position="1"/>
        <end position="308"/>
    </location>
</feature>
<feature type="region of interest" description="Important for dimerization" evidence="1">
    <location>
        <begin position="248"/>
        <end position="283"/>
    </location>
</feature>
<feature type="active site" description="Proton donor" evidence="1">
    <location>
        <position position="114"/>
    </location>
</feature>
<feature type="binding site" evidence="1">
    <location>
        <position position="100"/>
    </location>
    <ligand>
        <name>substrate</name>
    </ligand>
</feature>
<feature type="binding site" evidence="1">
    <location>
        <position position="104"/>
    </location>
    <ligand>
        <name>a divalent metal cation</name>
        <dbReference type="ChEBI" id="CHEBI:60240"/>
    </ligand>
</feature>
<feature type="binding site" evidence="1">
    <location>
        <position position="114"/>
    </location>
    <ligand>
        <name>a divalent metal cation</name>
        <dbReference type="ChEBI" id="CHEBI:60240"/>
    </ligand>
</feature>
<feature type="binding site" evidence="1">
    <location>
        <begin position="116"/>
        <end position="118"/>
    </location>
    <ligand>
        <name>substrate</name>
    </ligand>
</feature>
<feature type="binding site" evidence="1">
    <location>
        <position position="153"/>
    </location>
    <ligand>
        <name>a divalent metal cation</name>
        <dbReference type="ChEBI" id="CHEBI:60240"/>
    </ligand>
</feature>
<feature type="binding site" evidence="1">
    <location>
        <position position="183"/>
    </location>
    <ligand>
        <name>a divalent metal cation</name>
        <dbReference type="ChEBI" id="CHEBI:60240"/>
    </ligand>
</feature>
<feature type="binding site" evidence="1">
    <location>
        <begin position="266"/>
        <end position="268"/>
    </location>
    <ligand>
        <name>substrate</name>
    </ligand>
</feature>
<feature type="site" description="Important for dimerization" evidence="1">
    <location>
        <position position="183"/>
    </location>
</feature>
<keyword id="KW-0963">Cytoplasm</keyword>
<keyword id="KW-0350">Heme biosynthesis</keyword>
<keyword id="KW-0479">Metal-binding</keyword>
<keyword id="KW-0560">Oxidoreductase</keyword>
<keyword id="KW-0627">Porphyrin biosynthesis</keyword>
<keyword id="KW-1185">Reference proteome</keyword>
<gene>
    <name evidence="1" type="primary">hemF</name>
    <name type="ordered locus">FTT_1063</name>
</gene>
<reference key="1">
    <citation type="journal article" date="2005" name="Nat. Genet.">
        <title>The complete genome sequence of Francisella tularensis, the causative agent of tularemia.</title>
        <authorList>
            <person name="Larsson P."/>
            <person name="Oyston P.C.F."/>
            <person name="Chain P."/>
            <person name="Chu M.C."/>
            <person name="Duffield M."/>
            <person name="Fuxelius H.-H."/>
            <person name="Garcia E."/>
            <person name="Haelltorp G."/>
            <person name="Johansson D."/>
            <person name="Isherwood K.E."/>
            <person name="Karp P.D."/>
            <person name="Larsson E."/>
            <person name="Liu Y."/>
            <person name="Michell S."/>
            <person name="Prior J."/>
            <person name="Prior R."/>
            <person name="Malfatti S."/>
            <person name="Sjoestedt A."/>
            <person name="Svensson K."/>
            <person name="Thompson N."/>
            <person name="Vergez L."/>
            <person name="Wagg J.K."/>
            <person name="Wren B.W."/>
            <person name="Lindler L.E."/>
            <person name="Andersson S.G.E."/>
            <person name="Forsman M."/>
            <person name="Titball R.W."/>
        </authorList>
    </citation>
    <scope>NUCLEOTIDE SEQUENCE [LARGE SCALE GENOMIC DNA]</scope>
    <source>
        <strain>SCHU S4 / Schu 4</strain>
    </source>
</reference>
<proteinExistence type="inferred from homology"/>
<comment type="function">
    <text evidence="1">Involved in the heme biosynthesis. Catalyzes the aerobic oxidative decarboxylation of propionate groups of rings A and B of coproporphyrinogen-III to yield the vinyl groups in protoporphyrinogen-IX.</text>
</comment>
<comment type="catalytic activity">
    <reaction evidence="1">
        <text>coproporphyrinogen III + O2 + 2 H(+) = protoporphyrinogen IX + 2 CO2 + 2 H2O</text>
        <dbReference type="Rhea" id="RHEA:18257"/>
        <dbReference type="ChEBI" id="CHEBI:15377"/>
        <dbReference type="ChEBI" id="CHEBI:15378"/>
        <dbReference type="ChEBI" id="CHEBI:15379"/>
        <dbReference type="ChEBI" id="CHEBI:16526"/>
        <dbReference type="ChEBI" id="CHEBI:57307"/>
        <dbReference type="ChEBI" id="CHEBI:57309"/>
        <dbReference type="EC" id="1.3.3.3"/>
    </reaction>
</comment>
<comment type="cofactor">
    <cofactor evidence="1">
        <name>a divalent metal cation</name>
        <dbReference type="ChEBI" id="CHEBI:60240"/>
    </cofactor>
</comment>
<comment type="pathway">
    <text evidence="1">Porphyrin-containing compound metabolism; protoporphyrin-IX biosynthesis; protoporphyrinogen-IX from coproporphyrinogen-III (O2 route): step 1/1.</text>
</comment>
<comment type="subunit">
    <text evidence="1">Homodimer.</text>
</comment>
<comment type="subcellular location">
    <subcellularLocation>
        <location evidence="1">Cytoplasm</location>
    </subcellularLocation>
</comment>
<comment type="similarity">
    <text evidence="1">Belongs to the aerobic coproporphyrinogen-III oxidase family.</text>
</comment>
<evidence type="ECO:0000255" key="1">
    <source>
        <dbReference type="HAMAP-Rule" id="MF_00333"/>
    </source>
</evidence>
<organism>
    <name type="scientific">Francisella tularensis subsp. tularensis (strain SCHU S4 / Schu 4)</name>
    <dbReference type="NCBI Taxonomy" id="177416"/>
    <lineage>
        <taxon>Bacteria</taxon>
        <taxon>Pseudomonadati</taxon>
        <taxon>Pseudomonadota</taxon>
        <taxon>Gammaproteobacteria</taxon>
        <taxon>Thiotrichales</taxon>
        <taxon>Francisellaceae</taxon>
        <taxon>Francisella</taxon>
    </lineage>
</organism>
<dbReference type="EC" id="1.3.3.3" evidence="1"/>
<dbReference type="EMBL" id="AJ749949">
    <property type="protein sequence ID" value="CAG45696.1"/>
    <property type="molecule type" value="Genomic_DNA"/>
</dbReference>
<dbReference type="RefSeq" id="WP_003023689.1">
    <property type="nucleotide sequence ID" value="NC_006570.2"/>
</dbReference>
<dbReference type="RefSeq" id="YP_170044.1">
    <property type="nucleotide sequence ID" value="NC_006570.2"/>
</dbReference>
<dbReference type="SMR" id="Q5NFZ8"/>
<dbReference type="IntAct" id="Q5NFZ8">
    <property type="interactions" value="1"/>
</dbReference>
<dbReference type="STRING" id="177416.FTT_1063"/>
<dbReference type="DNASU" id="3192419"/>
<dbReference type="EnsemblBacteria" id="CAG45696">
    <property type="protein sequence ID" value="CAG45696"/>
    <property type="gene ID" value="FTT_1063"/>
</dbReference>
<dbReference type="KEGG" id="ftu:FTT_1063"/>
<dbReference type="eggNOG" id="COG0408">
    <property type="taxonomic scope" value="Bacteria"/>
</dbReference>
<dbReference type="OrthoDB" id="9777553at2"/>
<dbReference type="UniPathway" id="UPA00251">
    <property type="reaction ID" value="UER00322"/>
</dbReference>
<dbReference type="Proteomes" id="UP000001174">
    <property type="component" value="Chromosome"/>
</dbReference>
<dbReference type="GO" id="GO:0005737">
    <property type="term" value="C:cytoplasm"/>
    <property type="evidence" value="ECO:0007669"/>
    <property type="project" value="UniProtKB-SubCell"/>
</dbReference>
<dbReference type="GO" id="GO:0004109">
    <property type="term" value="F:coproporphyrinogen oxidase activity"/>
    <property type="evidence" value="ECO:0007669"/>
    <property type="project" value="UniProtKB-UniRule"/>
</dbReference>
<dbReference type="GO" id="GO:0046872">
    <property type="term" value="F:metal ion binding"/>
    <property type="evidence" value="ECO:0007669"/>
    <property type="project" value="UniProtKB-KW"/>
</dbReference>
<dbReference type="GO" id="GO:0042803">
    <property type="term" value="F:protein homodimerization activity"/>
    <property type="evidence" value="ECO:0000250"/>
    <property type="project" value="UniProtKB"/>
</dbReference>
<dbReference type="GO" id="GO:0006782">
    <property type="term" value="P:protoporphyrinogen IX biosynthetic process"/>
    <property type="evidence" value="ECO:0007669"/>
    <property type="project" value="UniProtKB-UniRule"/>
</dbReference>
<dbReference type="FunFam" id="3.40.1500.10:FF:000010">
    <property type="entry name" value="Oxygen-dependent coproporphyrinogen-III oxidase"/>
    <property type="match status" value="1"/>
</dbReference>
<dbReference type="Gene3D" id="3.40.1500.10">
    <property type="entry name" value="Coproporphyrinogen III oxidase, aerobic"/>
    <property type="match status" value="1"/>
</dbReference>
<dbReference type="HAMAP" id="MF_00333">
    <property type="entry name" value="Coprogen_oxidas"/>
    <property type="match status" value="1"/>
</dbReference>
<dbReference type="InterPro" id="IPR001260">
    <property type="entry name" value="Coprogen_oxidase_aer"/>
</dbReference>
<dbReference type="InterPro" id="IPR036406">
    <property type="entry name" value="Coprogen_oxidase_aer_sf"/>
</dbReference>
<dbReference type="InterPro" id="IPR018375">
    <property type="entry name" value="Coprogen_oxidase_CS"/>
</dbReference>
<dbReference type="NCBIfam" id="NF003727">
    <property type="entry name" value="PRK05330.1"/>
    <property type="match status" value="1"/>
</dbReference>
<dbReference type="PANTHER" id="PTHR10755">
    <property type="entry name" value="COPROPORPHYRINOGEN III OXIDASE, MITOCHONDRIAL"/>
    <property type="match status" value="1"/>
</dbReference>
<dbReference type="PANTHER" id="PTHR10755:SF0">
    <property type="entry name" value="OXYGEN-DEPENDENT COPROPORPHYRINOGEN-III OXIDASE, MITOCHONDRIAL"/>
    <property type="match status" value="1"/>
</dbReference>
<dbReference type="Pfam" id="PF01218">
    <property type="entry name" value="Coprogen_oxidas"/>
    <property type="match status" value="1"/>
</dbReference>
<dbReference type="PIRSF" id="PIRSF000166">
    <property type="entry name" value="Coproporphyri_ox"/>
    <property type="match status" value="1"/>
</dbReference>
<dbReference type="PRINTS" id="PR00073">
    <property type="entry name" value="COPRGNOXDASE"/>
</dbReference>
<dbReference type="SUPFAM" id="SSF102886">
    <property type="entry name" value="Coproporphyrinogen III oxidase"/>
    <property type="match status" value="1"/>
</dbReference>
<dbReference type="PROSITE" id="PS01021">
    <property type="entry name" value="COPROGEN_OXIDASE"/>
    <property type="match status" value="1"/>
</dbReference>
<accession>Q5NFZ8</accession>